<proteinExistence type="evidence at protein level"/>
<protein>
    <recommendedName>
        <fullName>Gamma-hemolysin component A</fullName>
    </recommendedName>
    <alternativeName>
        <fullName>H-gamma-2</fullName>
    </alternativeName>
    <alternativeName>
        <fullName>H-gamma-II</fullName>
    </alternativeName>
</protein>
<dbReference type="EMBL" id="BA000018">
    <property type="protein sequence ID" value="BAB43509.1"/>
    <property type="molecule type" value="Genomic_DNA"/>
</dbReference>
<dbReference type="PIR" id="D90043">
    <property type="entry name" value="D90043"/>
</dbReference>
<dbReference type="RefSeq" id="WP_000594519.1">
    <property type="nucleotide sequence ID" value="NC_002745.2"/>
</dbReference>
<dbReference type="SMR" id="P0A072"/>
<dbReference type="EnsemblBacteria" id="BAB43509">
    <property type="protein sequence ID" value="BAB43509"/>
    <property type="gene ID" value="BAB43509"/>
</dbReference>
<dbReference type="KEGG" id="sau:SA2207"/>
<dbReference type="HOGENOM" id="CLU_075311_0_0_9"/>
<dbReference type="GO" id="GO:0005576">
    <property type="term" value="C:extracellular region"/>
    <property type="evidence" value="ECO:0007669"/>
    <property type="project" value="UniProtKB-SubCell"/>
</dbReference>
<dbReference type="GO" id="GO:0090729">
    <property type="term" value="F:toxin activity"/>
    <property type="evidence" value="ECO:0007669"/>
    <property type="project" value="UniProtKB-KW"/>
</dbReference>
<dbReference type="GO" id="GO:0051715">
    <property type="term" value="P:cytolysis in another organism"/>
    <property type="evidence" value="ECO:0007669"/>
    <property type="project" value="InterPro"/>
</dbReference>
<dbReference type="Gene3D" id="2.70.240.10">
    <property type="entry name" value="Leukocidin/porin MspA"/>
    <property type="match status" value="1"/>
</dbReference>
<dbReference type="InterPro" id="IPR003963">
    <property type="entry name" value="Bi-component_toxin_staph"/>
</dbReference>
<dbReference type="InterPro" id="IPR016183">
    <property type="entry name" value="Leukocidin/Hemolysin_toxin"/>
</dbReference>
<dbReference type="InterPro" id="IPR036435">
    <property type="entry name" value="Leukocidin/porin_MspA_sf"/>
</dbReference>
<dbReference type="NCBIfam" id="TIGR01002">
    <property type="entry name" value="hlyII"/>
    <property type="match status" value="1"/>
</dbReference>
<dbReference type="Pfam" id="PF07968">
    <property type="entry name" value="Leukocidin"/>
    <property type="match status" value="1"/>
</dbReference>
<dbReference type="PRINTS" id="PR01468">
    <property type="entry name" value="BICOMPNTOXIN"/>
</dbReference>
<dbReference type="SUPFAM" id="SSF56959">
    <property type="entry name" value="Leukocidin-like"/>
    <property type="match status" value="1"/>
</dbReference>
<reference key="1">
    <citation type="journal article" date="2001" name="Lancet">
        <title>Whole genome sequencing of meticillin-resistant Staphylococcus aureus.</title>
        <authorList>
            <person name="Kuroda M."/>
            <person name="Ohta T."/>
            <person name="Uchiyama I."/>
            <person name="Baba T."/>
            <person name="Yuzawa H."/>
            <person name="Kobayashi I."/>
            <person name="Cui L."/>
            <person name="Oguchi A."/>
            <person name="Aoki K."/>
            <person name="Nagai Y."/>
            <person name="Lian J.-Q."/>
            <person name="Ito T."/>
            <person name="Kanamori M."/>
            <person name="Matsumaru H."/>
            <person name="Maruyama A."/>
            <person name="Murakami H."/>
            <person name="Hosoyama A."/>
            <person name="Mizutani-Ui Y."/>
            <person name="Takahashi N.K."/>
            <person name="Sawano T."/>
            <person name="Inoue R."/>
            <person name="Kaito C."/>
            <person name="Sekimizu K."/>
            <person name="Hirakawa H."/>
            <person name="Kuhara S."/>
            <person name="Goto S."/>
            <person name="Yabuzaki J."/>
            <person name="Kanehisa M."/>
            <person name="Yamashita A."/>
            <person name="Oshima K."/>
            <person name="Furuya K."/>
            <person name="Yoshino C."/>
            <person name="Shiba T."/>
            <person name="Hattori M."/>
            <person name="Ogasawara N."/>
            <person name="Hayashi H."/>
            <person name="Hiramatsu K."/>
        </authorList>
    </citation>
    <scope>NUCLEOTIDE SEQUENCE [LARGE SCALE GENOMIC DNA]</scope>
    <source>
        <strain>N315</strain>
    </source>
</reference>
<reference key="2">
    <citation type="submission" date="2007-10" db="UniProtKB">
        <title>Shotgun proteomic analysis of total and membrane protein extracts of S. aureus strain N315.</title>
        <authorList>
            <person name="Vaezzadeh A.R."/>
            <person name="Deshusses J."/>
            <person name="Lescuyer P."/>
            <person name="Hochstrasser D.F."/>
        </authorList>
    </citation>
    <scope>IDENTIFICATION BY MASS SPECTROMETRY [LARGE SCALE ANALYSIS]</scope>
    <source>
        <strain>N315</strain>
    </source>
</reference>
<sequence>MIKNKILTATLAVGLIAPLANPFIEISKAENKIEDIGQGAEIIKRTQDITSKRLAITQNIQFDFVKDKKYNKDALVVKMQGFISSRTTYSDLKKYPYIKRMIWPFQYNISLKTKDSNVDLINYLPKNKIDSADVSQKLGYNIGGNFQSAPSIGGSGSFNYSKTISYNQKNYVTEVESQNSKGVKWGVKANSFVTPNGQVSAYDQYLFAQDPTGPAARDYFVPDNQLPPLIQSGFNPSFITTLSHERGKGDKSEFEITYGRNMDATYAYVTRHRLAVDRKHDAFKNRNVTVKYEVNWKTHEVKIKSITPK</sequence>
<gene>
    <name type="primary">hlgA</name>
    <name type="synonym">hlg2</name>
    <name type="ordered locus">SA2207</name>
</gene>
<name>HLGA_STAAN</name>
<organism>
    <name type="scientific">Staphylococcus aureus (strain N315)</name>
    <dbReference type="NCBI Taxonomy" id="158879"/>
    <lineage>
        <taxon>Bacteria</taxon>
        <taxon>Bacillati</taxon>
        <taxon>Bacillota</taxon>
        <taxon>Bacilli</taxon>
        <taxon>Bacillales</taxon>
        <taxon>Staphylococcaceae</taxon>
        <taxon>Staphylococcus</taxon>
    </lineage>
</organism>
<comment type="function">
    <text evidence="1">Toxin that seems to act by forming pores in the membrane of the cell. Has a hemolytic and a leucotoxic activity (By similarity).</text>
</comment>
<comment type="subunit">
    <text evidence="1">Toxicity requires sequential binding and synergistic association of a class S and a class F component which form heterooligomeric complexes. HlgA (class S) associates with HlgB (class F) thus forming an AB toxin in strains producing both gamma-hemolysins and leukocidins. HlgA and LukF-PV can also form a complex (By similarity).</text>
</comment>
<comment type="subcellular location">
    <subcellularLocation>
        <location evidence="1">Secreted</location>
    </subcellularLocation>
</comment>
<comment type="similarity">
    <text evidence="2">Belongs to the aerolysin family.</text>
</comment>
<keyword id="KW-0204">Cytolysis</keyword>
<keyword id="KW-0354">Hemolysis</keyword>
<keyword id="KW-0964">Secreted</keyword>
<keyword id="KW-0732">Signal</keyword>
<keyword id="KW-0800">Toxin</keyword>
<keyword id="KW-0843">Virulence</keyword>
<feature type="signal peptide" evidence="1">
    <location>
        <begin position="1"/>
        <end position="29"/>
    </location>
</feature>
<feature type="chain" id="PRO_0000018420" description="Gamma-hemolysin component A">
    <location>
        <begin position="30"/>
        <end position="309"/>
    </location>
</feature>
<accession>P0A072</accession>
<accession>P31714</accession>
<accession>Q07225</accession>
<accession>Q53689</accession>
<accession>Q53690</accession>
<evidence type="ECO:0000250" key="1"/>
<evidence type="ECO:0000305" key="2"/>